<comment type="function">
    <text evidence="1">Catalyzes the attachment of alanine to tRNA(Ala) in a two-step reaction: alanine is first activated by ATP to form Ala-AMP and then transferred to the acceptor end of tRNA(Ala). Also edits incorrectly charged Ser-tRNA(Ala) and Gly-tRNA(Ala) via its editing domain.</text>
</comment>
<comment type="catalytic activity">
    <reaction evidence="1">
        <text>tRNA(Ala) + L-alanine + ATP = L-alanyl-tRNA(Ala) + AMP + diphosphate</text>
        <dbReference type="Rhea" id="RHEA:12540"/>
        <dbReference type="Rhea" id="RHEA-COMP:9657"/>
        <dbReference type="Rhea" id="RHEA-COMP:9923"/>
        <dbReference type="ChEBI" id="CHEBI:30616"/>
        <dbReference type="ChEBI" id="CHEBI:33019"/>
        <dbReference type="ChEBI" id="CHEBI:57972"/>
        <dbReference type="ChEBI" id="CHEBI:78442"/>
        <dbReference type="ChEBI" id="CHEBI:78497"/>
        <dbReference type="ChEBI" id="CHEBI:456215"/>
        <dbReference type="EC" id="6.1.1.7"/>
    </reaction>
</comment>
<comment type="cofactor">
    <cofactor evidence="1">
        <name>Zn(2+)</name>
        <dbReference type="ChEBI" id="CHEBI:29105"/>
    </cofactor>
    <text evidence="1">Binds 1 zinc ion per subunit.</text>
</comment>
<comment type="subcellular location">
    <subcellularLocation>
        <location evidence="1">Cytoplasm</location>
    </subcellularLocation>
</comment>
<comment type="domain">
    <text evidence="1">Consists of three domains; the N-terminal catalytic domain, the editing domain and the C-terminal C-Ala domain. The editing domain removes incorrectly charged amino acids, while the C-Ala domain, along with tRNA(Ala), serves as a bridge to cooperatively bring together the editing and aminoacylation centers thus stimulating deacylation of misacylated tRNAs.</text>
</comment>
<comment type="similarity">
    <text evidence="1">Belongs to the class-II aminoacyl-tRNA synthetase family.</text>
</comment>
<reference key="1">
    <citation type="journal article" date="2004" name="Nat. Biotechnol.">
        <title>Complete sequence and comparative genome analysis of the dairy bacterium Streptococcus thermophilus.</title>
        <authorList>
            <person name="Bolotin A."/>
            <person name="Quinquis B."/>
            <person name="Renault P."/>
            <person name="Sorokin A."/>
            <person name="Ehrlich S.D."/>
            <person name="Kulakauskas S."/>
            <person name="Lapidus A."/>
            <person name="Goltsman E."/>
            <person name="Mazur M."/>
            <person name="Pusch G.D."/>
            <person name="Fonstein M."/>
            <person name="Overbeek R."/>
            <person name="Kyprides N."/>
            <person name="Purnelle B."/>
            <person name="Prozzi D."/>
            <person name="Ngui K."/>
            <person name="Masuy D."/>
            <person name="Hancy F."/>
            <person name="Burteau S."/>
            <person name="Boutry M."/>
            <person name="Delcour J."/>
            <person name="Goffeau A."/>
            <person name="Hols P."/>
        </authorList>
    </citation>
    <scope>NUCLEOTIDE SEQUENCE [LARGE SCALE GENOMIC DNA]</scope>
    <source>
        <strain>CNRZ 1066</strain>
    </source>
</reference>
<proteinExistence type="inferred from homology"/>
<protein>
    <recommendedName>
        <fullName evidence="1">Alanine--tRNA ligase</fullName>
        <ecNumber evidence="1">6.1.1.7</ecNumber>
    </recommendedName>
    <alternativeName>
        <fullName evidence="1">Alanyl-tRNA synthetase</fullName>
        <shortName evidence="1">AlaRS</shortName>
    </alternativeName>
</protein>
<name>SYA_STRT1</name>
<keyword id="KW-0030">Aminoacyl-tRNA synthetase</keyword>
<keyword id="KW-0067">ATP-binding</keyword>
<keyword id="KW-0963">Cytoplasm</keyword>
<keyword id="KW-0436">Ligase</keyword>
<keyword id="KW-0479">Metal-binding</keyword>
<keyword id="KW-0547">Nucleotide-binding</keyword>
<keyword id="KW-0648">Protein biosynthesis</keyword>
<keyword id="KW-0694">RNA-binding</keyword>
<keyword id="KW-0820">tRNA-binding</keyword>
<keyword id="KW-0862">Zinc</keyword>
<dbReference type="EC" id="6.1.1.7" evidence="1"/>
<dbReference type="EMBL" id="CP000024">
    <property type="protein sequence ID" value="AAV62057.1"/>
    <property type="molecule type" value="Genomic_DNA"/>
</dbReference>
<dbReference type="RefSeq" id="WP_011225574.1">
    <property type="nucleotide sequence ID" value="NC_006449.1"/>
</dbReference>
<dbReference type="SMR" id="Q5M126"/>
<dbReference type="GeneID" id="66898369"/>
<dbReference type="KEGG" id="stc:str0457"/>
<dbReference type="HOGENOM" id="CLU_004485_1_1_9"/>
<dbReference type="GO" id="GO:0005829">
    <property type="term" value="C:cytosol"/>
    <property type="evidence" value="ECO:0007669"/>
    <property type="project" value="TreeGrafter"/>
</dbReference>
<dbReference type="GO" id="GO:0004813">
    <property type="term" value="F:alanine-tRNA ligase activity"/>
    <property type="evidence" value="ECO:0007669"/>
    <property type="project" value="UniProtKB-UniRule"/>
</dbReference>
<dbReference type="GO" id="GO:0002161">
    <property type="term" value="F:aminoacyl-tRNA deacylase activity"/>
    <property type="evidence" value="ECO:0007669"/>
    <property type="project" value="TreeGrafter"/>
</dbReference>
<dbReference type="GO" id="GO:0005524">
    <property type="term" value="F:ATP binding"/>
    <property type="evidence" value="ECO:0007669"/>
    <property type="project" value="UniProtKB-UniRule"/>
</dbReference>
<dbReference type="GO" id="GO:0140096">
    <property type="term" value="F:catalytic activity, acting on a protein"/>
    <property type="evidence" value="ECO:0007669"/>
    <property type="project" value="UniProtKB-ARBA"/>
</dbReference>
<dbReference type="GO" id="GO:0016740">
    <property type="term" value="F:transferase activity"/>
    <property type="evidence" value="ECO:0007669"/>
    <property type="project" value="UniProtKB-ARBA"/>
</dbReference>
<dbReference type="GO" id="GO:0000049">
    <property type="term" value="F:tRNA binding"/>
    <property type="evidence" value="ECO:0007669"/>
    <property type="project" value="UniProtKB-KW"/>
</dbReference>
<dbReference type="GO" id="GO:0008270">
    <property type="term" value="F:zinc ion binding"/>
    <property type="evidence" value="ECO:0007669"/>
    <property type="project" value="UniProtKB-UniRule"/>
</dbReference>
<dbReference type="GO" id="GO:0006419">
    <property type="term" value="P:alanyl-tRNA aminoacylation"/>
    <property type="evidence" value="ECO:0007669"/>
    <property type="project" value="UniProtKB-UniRule"/>
</dbReference>
<dbReference type="CDD" id="cd00673">
    <property type="entry name" value="AlaRS_core"/>
    <property type="match status" value="1"/>
</dbReference>
<dbReference type="FunFam" id="3.10.310.40:FF:000001">
    <property type="entry name" value="Alanine--tRNA ligase"/>
    <property type="match status" value="1"/>
</dbReference>
<dbReference type="FunFam" id="3.30.54.20:FF:000001">
    <property type="entry name" value="Alanine--tRNA ligase"/>
    <property type="match status" value="1"/>
</dbReference>
<dbReference type="FunFam" id="3.30.930.10:FF:000046">
    <property type="entry name" value="Alanine--tRNA ligase"/>
    <property type="match status" value="1"/>
</dbReference>
<dbReference type="FunFam" id="3.30.980.10:FF:000004">
    <property type="entry name" value="Alanine--tRNA ligase, cytoplasmic"/>
    <property type="match status" value="1"/>
</dbReference>
<dbReference type="Gene3D" id="2.40.30.130">
    <property type="match status" value="1"/>
</dbReference>
<dbReference type="Gene3D" id="3.10.310.40">
    <property type="match status" value="1"/>
</dbReference>
<dbReference type="Gene3D" id="3.30.54.20">
    <property type="match status" value="1"/>
</dbReference>
<dbReference type="Gene3D" id="6.10.250.550">
    <property type="match status" value="1"/>
</dbReference>
<dbReference type="Gene3D" id="3.30.930.10">
    <property type="entry name" value="Bira Bifunctional Protein, Domain 2"/>
    <property type="match status" value="1"/>
</dbReference>
<dbReference type="Gene3D" id="3.30.980.10">
    <property type="entry name" value="Threonyl-trna Synthetase, Chain A, domain 2"/>
    <property type="match status" value="1"/>
</dbReference>
<dbReference type="HAMAP" id="MF_00036_B">
    <property type="entry name" value="Ala_tRNA_synth_B"/>
    <property type="match status" value="1"/>
</dbReference>
<dbReference type="InterPro" id="IPR045864">
    <property type="entry name" value="aa-tRNA-synth_II/BPL/LPL"/>
</dbReference>
<dbReference type="InterPro" id="IPR002318">
    <property type="entry name" value="Ala-tRNA-lgiase_IIc"/>
</dbReference>
<dbReference type="InterPro" id="IPR018162">
    <property type="entry name" value="Ala-tRNA-ligase_IIc_anticod-bd"/>
</dbReference>
<dbReference type="InterPro" id="IPR018165">
    <property type="entry name" value="Ala-tRNA-synth_IIc_core"/>
</dbReference>
<dbReference type="InterPro" id="IPR018164">
    <property type="entry name" value="Ala-tRNA-synth_IIc_N"/>
</dbReference>
<dbReference type="InterPro" id="IPR050058">
    <property type="entry name" value="Ala-tRNA_ligase"/>
</dbReference>
<dbReference type="InterPro" id="IPR023033">
    <property type="entry name" value="Ala_tRNA_ligase_euk/bac"/>
</dbReference>
<dbReference type="InterPro" id="IPR003156">
    <property type="entry name" value="DHHA1_dom"/>
</dbReference>
<dbReference type="InterPro" id="IPR018163">
    <property type="entry name" value="Thr/Ala-tRNA-synth_IIc_edit"/>
</dbReference>
<dbReference type="InterPro" id="IPR009000">
    <property type="entry name" value="Transl_B-barrel_sf"/>
</dbReference>
<dbReference type="InterPro" id="IPR012947">
    <property type="entry name" value="tRNA_SAD"/>
</dbReference>
<dbReference type="NCBIfam" id="TIGR00344">
    <property type="entry name" value="alaS"/>
    <property type="match status" value="1"/>
</dbReference>
<dbReference type="PANTHER" id="PTHR11777:SF9">
    <property type="entry name" value="ALANINE--TRNA LIGASE, CYTOPLASMIC"/>
    <property type="match status" value="1"/>
</dbReference>
<dbReference type="PANTHER" id="PTHR11777">
    <property type="entry name" value="ALANYL-TRNA SYNTHETASE"/>
    <property type="match status" value="1"/>
</dbReference>
<dbReference type="Pfam" id="PF02272">
    <property type="entry name" value="DHHA1"/>
    <property type="match status" value="1"/>
</dbReference>
<dbReference type="Pfam" id="PF01411">
    <property type="entry name" value="tRNA-synt_2c"/>
    <property type="match status" value="1"/>
</dbReference>
<dbReference type="Pfam" id="PF07973">
    <property type="entry name" value="tRNA_SAD"/>
    <property type="match status" value="1"/>
</dbReference>
<dbReference type="PRINTS" id="PR00980">
    <property type="entry name" value="TRNASYNTHALA"/>
</dbReference>
<dbReference type="SMART" id="SM00863">
    <property type="entry name" value="tRNA_SAD"/>
    <property type="match status" value="1"/>
</dbReference>
<dbReference type="SUPFAM" id="SSF55681">
    <property type="entry name" value="Class II aaRS and biotin synthetases"/>
    <property type="match status" value="1"/>
</dbReference>
<dbReference type="SUPFAM" id="SSF101353">
    <property type="entry name" value="Putative anticodon-binding domain of alanyl-tRNA synthetase (AlaRS)"/>
    <property type="match status" value="1"/>
</dbReference>
<dbReference type="SUPFAM" id="SSF55186">
    <property type="entry name" value="ThrRS/AlaRS common domain"/>
    <property type="match status" value="1"/>
</dbReference>
<dbReference type="SUPFAM" id="SSF50447">
    <property type="entry name" value="Translation proteins"/>
    <property type="match status" value="1"/>
</dbReference>
<dbReference type="PROSITE" id="PS50860">
    <property type="entry name" value="AA_TRNA_LIGASE_II_ALA"/>
    <property type="match status" value="1"/>
</dbReference>
<accession>Q5M126</accession>
<sequence length="872" mass="96716">MKQLTSAQIRQMWLDFWKSKGHAVEPSANLVPVNDPTLLWINSGVATLKKYFDGSVIPENPRITNSQKAIRTNDIENVGKTARHHTMFEMLGNFSVGDYFRDEAIEWGYELLTSPEWFDLPKDKLYMTYYPDDKDSYNRWIACGVEPSHLIPIEDNFWEIGAGPSGPDTEIFFDRGEEFDPDNIGIRLLEEDIENDRYIEIWNIVLSQFNADPAVPRSEYKELPNKNIDTGAGLERLAAVMQGAKTNFETDLFMPIIREIEKMSGKAYDPDGETLSFKVIADHIRSLAFAIGDGALPGNEGRGYVLRRLLRRAVMHGRRLGISDAFLYKLVPTVGQIMESYYPEVLEKRDFIEKIVKREEETFARTIDAGSSMLDELLANLKKSGKDTLEGKDIFKLYDTYGFPVELTEELAEDEGFKIDHEGFKAAMKEQQDRARASVVKGGSMGMQNETLANITEPSEFLYEAETAESRLSVIVADDARHDSVNSGQALLVFEQTPFYAEMGGQVADHGTISDAAGTTVARVVDVQRAPNGQALHTVEVEGELVVGANYKLEIDHSRRHRVMKNHTATHLLHAALHNIVGNHAVQAGSLNEQEFLRFDFTHFEAVTPEELRAIEEQVNEEIWKATPVTTIETDIDTAKSMGAMALFGEKYGKRVRVVSIGDYSVELCGGTHVANTAEIGMFKIIKEEGIGSGTRRILAVTSREAYLAYREEEDALKSIAATLKAPQLKEVPNKVASLQEQLHALQKENATLKEKAAAAAAGDVFKDVKEANGVRYIASQVEVSDAGALRTFADQWKQADYSDVLVLAAHIREKVNVLVASKSENVHAGNLIKVLAPIVSGRGGGKPDMAMAGGSDANSIQDLLSAVAEQF</sequence>
<gene>
    <name evidence="1" type="primary">alaS</name>
    <name type="ordered locus">str0457</name>
</gene>
<evidence type="ECO:0000255" key="1">
    <source>
        <dbReference type="HAMAP-Rule" id="MF_00036"/>
    </source>
</evidence>
<feature type="chain" id="PRO_0000075222" description="Alanine--tRNA ligase">
    <location>
        <begin position="1"/>
        <end position="872"/>
    </location>
</feature>
<feature type="binding site" evidence="1">
    <location>
        <position position="567"/>
    </location>
    <ligand>
        <name>Zn(2+)</name>
        <dbReference type="ChEBI" id="CHEBI:29105"/>
    </ligand>
</feature>
<feature type="binding site" evidence="1">
    <location>
        <position position="571"/>
    </location>
    <ligand>
        <name>Zn(2+)</name>
        <dbReference type="ChEBI" id="CHEBI:29105"/>
    </ligand>
</feature>
<feature type="binding site" evidence="1">
    <location>
        <position position="669"/>
    </location>
    <ligand>
        <name>Zn(2+)</name>
        <dbReference type="ChEBI" id="CHEBI:29105"/>
    </ligand>
</feature>
<feature type="binding site" evidence="1">
    <location>
        <position position="673"/>
    </location>
    <ligand>
        <name>Zn(2+)</name>
        <dbReference type="ChEBI" id="CHEBI:29105"/>
    </ligand>
</feature>
<organism>
    <name type="scientific">Streptococcus thermophilus (strain CNRZ 1066)</name>
    <dbReference type="NCBI Taxonomy" id="299768"/>
    <lineage>
        <taxon>Bacteria</taxon>
        <taxon>Bacillati</taxon>
        <taxon>Bacillota</taxon>
        <taxon>Bacilli</taxon>
        <taxon>Lactobacillales</taxon>
        <taxon>Streptococcaceae</taxon>
        <taxon>Streptococcus</taxon>
    </lineage>
</organism>